<dbReference type="EMBL" id="AC125065">
    <property type="status" value="NOT_ANNOTATED_CDS"/>
    <property type="molecule type" value="Genomic_DNA"/>
</dbReference>
<dbReference type="EMBL" id="BC147492">
    <property type="protein sequence ID" value="AAI47493.1"/>
    <property type="molecule type" value="mRNA"/>
</dbReference>
<dbReference type="CCDS" id="CCDS39349.1"/>
<dbReference type="RefSeq" id="NP_001074734.1">
    <property type="nucleotide sequence ID" value="NM_001081265.2"/>
</dbReference>
<dbReference type="SMR" id="B9EJR8"/>
<dbReference type="FunCoup" id="B9EJR8">
    <property type="interactions" value="1363"/>
</dbReference>
<dbReference type="IntAct" id="B9EJR8">
    <property type="interactions" value="11"/>
</dbReference>
<dbReference type="STRING" id="10090.ENSMUSP00000026975"/>
<dbReference type="GlyGen" id="B9EJR8">
    <property type="glycosylation" value="1 site, 1 O-linked glycan (1 site)"/>
</dbReference>
<dbReference type="iPTMnet" id="B9EJR8"/>
<dbReference type="PhosphoSitePlus" id="B9EJR8"/>
<dbReference type="SwissPalm" id="B9EJR8"/>
<dbReference type="PaxDb" id="10090-ENSMUSP00000026975"/>
<dbReference type="PeptideAtlas" id="B9EJR8"/>
<dbReference type="ProteomicsDB" id="279145"/>
<dbReference type="Pumba" id="B9EJR8"/>
<dbReference type="Antibodypedia" id="10790">
    <property type="antibodies" value="83 antibodies from 18 providers"/>
</dbReference>
<dbReference type="DNASU" id="433956"/>
<dbReference type="Ensembl" id="ENSMUST00000026975.11">
    <property type="protein sequence ID" value="ENSMUSP00000026975.7"/>
    <property type="gene ID" value="ENSMUSG00000025857.11"/>
</dbReference>
<dbReference type="GeneID" id="433956"/>
<dbReference type="KEGG" id="mmu:433956"/>
<dbReference type="UCSC" id="uc009afz.1">
    <property type="organism name" value="mouse"/>
</dbReference>
<dbReference type="AGR" id="MGI:3616079"/>
<dbReference type="CTD" id="54919"/>
<dbReference type="MGI" id="MGI:3616079">
    <property type="gene designation" value="Dnaaf5"/>
</dbReference>
<dbReference type="VEuPathDB" id="HostDB:ENSMUSG00000025857"/>
<dbReference type="eggNOG" id="ENOG502QRXT">
    <property type="taxonomic scope" value="Eukaryota"/>
</dbReference>
<dbReference type="GeneTree" id="ENSGT00390000005666"/>
<dbReference type="HOGENOM" id="CLU_010823_1_0_1"/>
<dbReference type="InParanoid" id="B9EJR8"/>
<dbReference type="OMA" id="AFQGPWA"/>
<dbReference type="OrthoDB" id="413572at2759"/>
<dbReference type="PhylomeDB" id="B9EJR8"/>
<dbReference type="TreeFam" id="TF326738"/>
<dbReference type="BioGRID-ORCS" id="433956">
    <property type="hits" value="25 hits in 79 CRISPR screens"/>
</dbReference>
<dbReference type="ChiTaRS" id="Dnaaf5">
    <property type="organism name" value="mouse"/>
</dbReference>
<dbReference type="PRO" id="PR:B9EJR8"/>
<dbReference type="Proteomes" id="UP000000589">
    <property type="component" value="Chromosome 5"/>
</dbReference>
<dbReference type="RNAct" id="B9EJR8">
    <property type="molecule type" value="protein"/>
</dbReference>
<dbReference type="Bgee" id="ENSMUSG00000025857">
    <property type="expression patterns" value="Expressed in animal zygote and 257 other cell types or tissues"/>
</dbReference>
<dbReference type="ExpressionAtlas" id="B9EJR8">
    <property type="expression patterns" value="baseline and differential"/>
</dbReference>
<dbReference type="GO" id="GO:0005737">
    <property type="term" value="C:cytoplasm"/>
    <property type="evidence" value="ECO:0000314"/>
    <property type="project" value="UniProtKB"/>
</dbReference>
<dbReference type="GO" id="GO:0005829">
    <property type="term" value="C:cytosol"/>
    <property type="evidence" value="ECO:0007669"/>
    <property type="project" value="Ensembl"/>
</dbReference>
<dbReference type="GO" id="GO:0120293">
    <property type="term" value="C:dynein axonemal particle"/>
    <property type="evidence" value="ECO:0000250"/>
    <property type="project" value="UniProtKB"/>
</dbReference>
<dbReference type="GO" id="GO:0072686">
    <property type="term" value="C:mitotic spindle"/>
    <property type="evidence" value="ECO:0007669"/>
    <property type="project" value="Ensembl"/>
</dbReference>
<dbReference type="GO" id="GO:0005730">
    <property type="term" value="C:nucleolus"/>
    <property type="evidence" value="ECO:0007669"/>
    <property type="project" value="Ensembl"/>
</dbReference>
<dbReference type="GO" id="GO:0045505">
    <property type="term" value="F:dynein intermediate chain binding"/>
    <property type="evidence" value="ECO:0007669"/>
    <property type="project" value="Ensembl"/>
</dbReference>
<dbReference type="GO" id="GO:0003341">
    <property type="term" value="P:cilium movement"/>
    <property type="evidence" value="ECO:0000250"/>
    <property type="project" value="UniProtKB"/>
</dbReference>
<dbReference type="GO" id="GO:0036159">
    <property type="term" value="P:inner dynein arm assembly"/>
    <property type="evidence" value="ECO:0000250"/>
    <property type="project" value="UniProtKB"/>
</dbReference>
<dbReference type="GO" id="GO:0036158">
    <property type="term" value="P:outer dynein arm assembly"/>
    <property type="evidence" value="ECO:0000250"/>
    <property type="project" value="UniProtKB"/>
</dbReference>
<dbReference type="FunFam" id="1.25.10.10:FF:000547">
    <property type="entry name" value="Dynein assembly factor 5, axonemal"/>
    <property type="match status" value="1"/>
</dbReference>
<dbReference type="FunFam" id="1.25.10.10:FF:002009">
    <property type="entry name" value="Dynein assembly factor 5, axonemal"/>
    <property type="match status" value="1"/>
</dbReference>
<dbReference type="FunFam" id="1.25.10.10:FF:001106">
    <property type="entry name" value="Dynein, axonemal, assembly factor 5"/>
    <property type="match status" value="1"/>
</dbReference>
<dbReference type="Gene3D" id="1.25.10.10">
    <property type="entry name" value="Leucine-rich Repeat Variant"/>
    <property type="match status" value="3"/>
</dbReference>
<dbReference type="InterPro" id="IPR011989">
    <property type="entry name" value="ARM-like"/>
</dbReference>
<dbReference type="InterPro" id="IPR016024">
    <property type="entry name" value="ARM-type_fold"/>
</dbReference>
<dbReference type="InterPro" id="IPR052623">
    <property type="entry name" value="DAAF5"/>
</dbReference>
<dbReference type="InterPro" id="IPR056497">
    <property type="entry name" value="HEAT_DAAF5"/>
</dbReference>
<dbReference type="InterPro" id="IPR034085">
    <property type="entry name" value="TOG"/>
</dbReference>
<dbReference type="PANTHER" id="PTHR16216">
    <property type="entry name" value="DYNEIN ASSEMBLY FACTOR 5, AXONEMAL"/>
    <property type="match status" value="1"/>
</dbReference>
<dbReference type="PANTHER" id="PTHR16216:SF2">
    <property type="entry name" value="DYNEIN AXONEMAL ASSEMBLY FACTOR 5"/>
    <property type="match status" value="1"/>
</dbReference>
<dbReference type="Pfam" id="PF24573">
    <property type="entry name" value="HEAT_DAAF5"/>
    <property type="match status" value="1"/>
</dbReference>
<dbReference type="SMART" id="SM01349">
    <property type="entry name" value="TOG"/>
    <property type="match status" value="1"/>
</dbReference>
<dbReference type="SUPFAM" id="SSF48371">
    <property type="entry name" value="ARM repeat"/>
    <property type="match status" value="1"/>
</dbReference>
<comment type="function">
    <text evidence="1">Cytoplasmic protein involved in the delivery of the dynein machinery to the motile cilium. It is required for the assembly of the axonemal dynein inner and outer arms, two structures attached to the peripheral outer doublet A microtubule of the axoneme, that play a crucial role in cilium motility.</text>
</comment>
<comment type="subunit">
    <text evidence="1">Interacts with DNAI2; probably involved in outer arm dynein assembly.</text>
</comment>
<comment type="subcellular location">
    <subcellularLocation>
        <location evidence="3">Cytoplasm</location>
    </subcellularLocation>
    <subcellularLocation>
        <location evidence="1">Cytoplasmic granule</location>
    </subcellularLocation>
    <text evidence="3">Observed only in the cytoplasm of ciliated cells and absent from cilia.</text>
</comment>
<comment type="tissue specificity">
    <text evidence="3">Expressed in ciliated cells including ependymal cells lining the lateral ventricles and multiciliated epithelium of oviduct ampulla.</text>
</comment>
<comment type="developmental stage">
    <text evidence="3">Enriched in tissues with differentiating ciliated cells including 18.5 dpc trachea and bronchus.</text>
</comment>
<comment type="similarity">
    <text evidence="4">Belongs to the DNAAF5 family.</text>
</comment>
<keyword id="KW-0007">Acetylation</keyword>
<keyword id="KW-0970">Cilium biogenesis/degradation</keyword>
<keyword id="KW-0963">Cytoplasm</keyword>
<keyword id="KW-1185">Reference proteome</keyword>
<keyword id="KW-0677">Repeat</keyword>
<gene>
    <name evidence="6" type="primary">Dnaaf5</name>
    <name evidence="6" type="synonym">Heatr2</name>
</gene>
<proteinExistence type="evidence at protein level"/>
<reference key="1">
    <citation type="journal article" date="2009" name="PLoS Biol.">
        <title>Lineage-specific biology revealed by a finished genome assembly of the mouse.</title>
        <authorList>
            <person name="Church D.M."/>
            <person name="Goodstadt L."/>
            <person name="Hillier L.W."/>
            <person name="Zody M.C."/>
            <person name="Goldstein S."/>
            <person name="She X."/>
            <person name="Bult C.J."/>
            <person name="Agarwala R."/>
            <person name="Cherry J.L."/>
            <person name="DiCuccio M."/>
            <person name="Hlavina W."/>
            <person name="Kapustin Y."/>
            <person name="Meric P."/>
            <person name="Maglott D."/>
            <person name="Birtle Z."/>
            <person name="Marques A.C."/>
            <person name="Graves T."/>
            <person name="Zhou S."/>
            <person name="Teague B."/>
            <person name="Potamousis K."/>
            <person name="Churas C."/>
            <person name="Place M."/>
            <person name="Herschleb J."/>
            <person name="Runnheim R."/>
            <person name="Forrest D."/>
            <person name="Amos-Landgraf J."/>
            <person name="Schwartz D.C."/>
            <person name="Cheng Z."/>
            <person name="Lindblad-Toh K."/>
            <person name="Eichler E.E."/>
            <person name="Ponting C.P."/>
        </authorList>
    </citation>
    <scope>NUCLEOTIDE SEQUENCE [LARGE SCALE GENOMIC DNA]</scope>
    <source>
        <strain>C57BL/6J</strain>
    </source>
</reference>
<reference key="2">
    <citation type="journal article" date="2004" name="Genome Res.">
        <title>The status, quality, and expansion of the NIH full-length cDNA project: the Mammalian Gene Collection (MGC).</title>
        <authorList>
            <consortium name="The MGC Project Team"/>
        </authorList>
    </citation>
    <scope>NUCLEOTIDE SEQUENCE [LARGE SCALE MRNA]</scope>
    <source>
        <tissue>Brain</tissue>
    </source>
</reference>
<reference key="3">
    <citation type="journal article" date="2010" name="Cell">
        <title>A tissue-specific atlas of mouse protein phosphorylation and expression.</title>
        <authorList>
            <person name="Huttlin E.L."/>
            <person name="Jedrychowski M.P."/>
            <person name="Elias J.E."/>
            <person name="Goswami T."/>
            <person name="Rad R."/>
            <person name="Beausoleil S.A."/>
            <person name="Villen J."/>
            <person name="Haas W."/>
            <person name="Sowa M.E."/>
            <person name="Gygi S.P."/>
        </authorList>
    </citation>
    <scope>IDENTIFICATION BY MASS SPECTROMETRY [LARGE SCALE ANALYSIS]</scope>
    <source>
        <tissue>Heart</tissue>
        <tissue>Kidney</tissue>
        <tissue>Lung</tissue>
        <tissue>Spleen</tissue>
        <tissue>Testis</tissue>
    </source>
</reference>
<reference key="4">
    <citation type="journal article" date="2014" name="PLoS Genet.">
        <title>HEATR2 plays a conserved role in assembly of the ciliary motile apparatus.</title>
        <authorList>
            <person name="Diggle C.P."/>
            <person name="Moore D.J."/>
            <person name="Mali G."/>
            <person name="zur Lage P."/>
            <person name="Ait-Lounis A."/>
            <person name="Schmidts M."/>
            <person name="Shoemark A."/>
            <person name="Garcia Munoz A."/>
            <person name="Halachev M.R."/>
            <person name="Gautier P."/>
            <person name="Yeyati P.L."/>
            <person name="Bonthron D.T."/>
            <person name="Carr I.M."/>
            <person name="Hayward B."/>
            <person name="Markham A.F."/>
            <person name="Hope J.E."/>
            <person name="von Kriegsheim A."/>
            <person name="Mitchison H.M."/>
            <person name="Jackson I.J."/>
            <person name="Durand B."/>
            <person name="Reith W."/>
            <person name="Sheridan E."/>
            <person name="Jarman A.P."/>
            <person name="Mill P."/>
        </authorList>
    </citation>
    <scope>SUBCELLULAR LOCATION</scope>
    <scope>TISSUE SPECIFICITY</scope>
    <scope>DEVELOPMENTAL STAGE</scope>
</reference>
<evidence type="ECO:0000250" key="1">
    <source>
        <dbReference type="UniProtKB" id="Q86Y56"/>
    </source>
</evidence>
<evidence type="ECO:0000255" key="2"/>
<evidence type="ECO:0000269" key="3">
    <source>
    </source>
</evidence>
<evidence type="ECO:0000305" key="4"/>
<evidence type="ECO:0000312" key="5">
    <source>
        <dbReference type="EMBL" id="AAI47493.1"/>
    </source>
</evidence>
<evidence type="ECO:0000312" key="6">
    <source>
        <dbReference type="MGI" id="MGI:3616079"/>
    </source>
</evidence>
<name>DAAF5_MOUSE</name>
<feature type="initiator methionine" description="Removed" evidence="1">
    <location>
        <position position="1"/>
    </location>
</feature>
<feature type="chain" id="PRO_0000431656" description="Dynein axonemal assembly factor 5">
    <location>
        <begin position="2"/>
        <end position="853"/>
    </location>
</feature>
<feature type="repeat" description="HEAT 1" evidence="2">
    <location>
        <begin position="69"/>
        <end position="107"/>
    </location>
</feature>
<feature type="repeat" description="HEAT 2" evidence="2">
    <location>
        <begin position="200"/>
        <end position="238"/>
    </location>
</feature>
<feature type="repeat" description="HEAT 3" evidence="2">
    <location>
        <begin position="240"/>
        <end position="276"/>
    </location>
</feature>
<feature type="repeat" description="HEAT 4" evidence="2">
    <location>
        <begin position="278"/>
        <end position="316"/>
    </location>
</feature>
<feature type="repeat" description="HEAT 5" evidence="2">
    <location>
        <begin position="374"/>
        <end position="412"/>
    </location>
</feature>
<feature type="repeat" description="HEAT 6" evidence="2">
    <location>
        <begin position="597"/>
        <end position="636"/>
    </location>
</feature>
<feature type="repeat" description="HEAT 7" evidence="2">
    <location>
        <begin position="694"/>
        <end position="732"/>
    </location>
</feature>
<feature type="repeat" description="HEAT 8" evidence="2">
    <location>
        <begin position="736"/>
        <end position="774"/>
    </location>
</feature>
<feature type="repeat" description="HEAT 9" evidence="2">
    <location>
        <begin position="782"/>
        <end position="820"/>
    </location>
</feature>
<feature type="modified residue" description="N-acetylalanine" evidence="1">
    <location>
        <position position="2"/>
    </location>
</feature>
<accession>B9EJR8</accession>
<organism evidence="5">
    <name type="scientific">Mus musculus</name>
    <name type="common">Mouse</name>
    <dbReference type="NCBI Taxonomy" id="10090"/>
    <lineage>
        <taxon>Eukaryota</taxon>
        <taxon>Metazoa</taxon>
        <taxon>Chordata</taxon>
        <taxon>Craniata</taxon>
        <taxon>Vertebrata</taxon>
        <taxon>Euteleostomi</taxon>
        <taxon>Mammalia</taxon>
        <taxon>Eutheria</taxon>
        <taxon>Euarchontoglires</taxon>
        <taxon>Glires</taxon>
        <taxon>Rodentia</taxon>
        <taxon>Myomorpha</taxon>
        <taxon>Muroidea</taxon>
        <taxon>Muridae</taxon>
        <taxon>Murinae</taxon>
        <taxon>Mus</taxon>
        <taxon>Mus</taxon>
    </lineage>
</organism>
<protein>
    <recommendedName>
        <fullName evidence="1">Dynein axonemal assembly factor 5</fullName>
    </recommendedName>
    <alternativeName>
        <fullName evidence="4">HEAT repeat-containing protein 2</fullName>
    </alternativeName>
</protein>
<sequence length="853" mass="93851">MAAPAEAEVAAAPGLTEAAEAAELTRALSRLLPGLETESKLGRRRALEALEQVLEEAVRPGADSAAFQGPWARLLLPRLLRLLSDPAEGCRALAAHLLDLGLRRAARPRDALPRLLPALSARLARPELARPPPEPCEELRLALVQLLHLAVDLGGAALAPHLDDAVRALRAALLDPFAAVRREGCECAAALARATPEHFHMQSESLIGPLMQTISHQHWKVRVAVIEATGTVIQFGSGNSVDDVLSHFAQRLFDDVPQVRQAVTSVVGGWLLNLRDRYSFLHKLTPLLLSSFSDEMPEIRQTATSLWEKVGLQWQQENEADLKDKLDFASPPPPNYPEHESRPGLGCRELVFRNLSKVLPAICHDITDWVVGTRVKAAQLLPVLLLHAEDHITQHLEIVLRTLHQACTDEEKAVVGSCIRAAELIGTFVSPEVFLKLILAMLKKAPSASGLLILASVIRGCPRNALQPHVTVIATELAQEHICQGSENNLYLEHLLLCVQALLSVCQEDCRAASLQFLEVLVTIMAVSDAVGLEKKAQKTMDTLAEVEDIPSSQDLYRKHVGALLERLTASHGEWAVHSVQLLKFTVLLTQAGPAVGEALQHVIPTLRACLQPSTDPHMRLKLFSILSMMLLRPKDTVDSQGQFRGYLDMVINDILAPNLQWHAGRTAAAIRTAAISCLWALISSDILSAKQVQEAQETLMPQVLATLEDDSQTTRLMSCRIINMFLKNSGDTMEPEKFLKVYPELLKRLDDVSNDVRMAAASALLTWLKCIESLDGKSAYQSSVQFLYRELLVHLDDPESAIQDTVLEVLKEGSVLFPDVLVRETEAVVHKHRSATYCEQLLQHMQTMAAAR</sequence>